<accession>Q5T9S5</accession>
<accession>Q6ZU17</accession>
<proteinExistence type="evidence at protein level"/>
<comment type="subcellular location">
    <subcellularLocation>
        <location evidence="4">Cytoplasm</location>
        <location evidence="4">Cytoskeleton</location>
        <location evidence="4">Microtubule organizing center</location>
        <location evidence="4">Centrosome</location>
        <location evidence="4">Centriolar satellite</location>
    </subcellularLocation>
</comment>
<comment type="alternative products">
    <event type="alternative splicing"/>
    <isoform>
        <id>Q5T9S5-1</id>
        <name>1</name>
        <sequence type="displayed"/>
    </isoform>
    <isoform>
        <id>Q5T9S5-2</id>
        <name>2</name>
        <sequence type="described" ref="VSP_024636"/>
    </isoform>
</comment>
<comment type="sequence caution" evidence="6">
    <conflict type="erroneous initiation">
        <sequence resource="EMBL-CDS" id="BAC86410"/>
    </conflict>
</comment>
<reference key="1">
    <citation type="journal article" date="2006" name="Nature">
        <title>The DNA sequence and biological annotation of human chromosome 1.</title>
        <authorList>
            <person name="Gregory S.G."/>
            <person name="Barlow K.F."/>
            <person name="McLay K.E."/>
            <person name="Kaul R."/>
            <person name="Swarbreck D."/>
            <person name="Dunham A."/>
            <person name="Scott C.E."/>
            <person name="Howe K.L."/>
            <person name="Woodfine K."/>
            <person name="Spencer C.C.A."/>
            <person name="Jones M.C."/>
            <person name="Gillson C."/>
            <person name="Searle S."/>
            <person name="Zhou Y."/>
            <person name="Kokocinski F."/>
            <person name="McDonald L."/>
            <person name="Evans R."/>
            <person name="Phillips K."/>
            <person name="Atkinson A."/>
            <person name="Cooper R."/>
            <person name="Jones C."/>
            <person name="Hall R.E."/>
            <person name="Andrews T.D."/>
            <person name="Lloyd C."/>
            <person name="Ainscough R."/>
            <person name="Almeida J.P."/>
            <person name="Ambrose K.D."/>
            <person name="Anderson F."/>
            <person name="Andrew R.W."/>
            <person name="Ashwell R.I.S."/>
            <person name="Aubin K."/>
            <person name="Babbage A.K."/>
            <person name="Bagguley C.L."/>
            <person name="Bailey J."/>
            <person name="Beasley H."/>
            <person name="Bethel G."/>
            <person name="Bird C.P."/>
            <person name="Bray-Allen S."/>
            <person name="Brown J.Y."/>
            <person name="Brown A.J."/>
            <person name="Buckley D."/>
            <person name="Burton J."/>
            <person name="Bye J."/>
            <person name="Carder C."/>
            <person name="Chapman J.C."/>
            <person name="Clark S.Y."/>
            <person name="Clarke G."/>
            <person name="Clee C."/>
            <person name="Cobley V."/>
            <person name="Collier R.E."/>
            <person name="Corby N."/>
            <person name="Coville G.J."/>
            <person name="Davies J."/>
            <person name="Deadman R."/>
            <person name="Dunn M."/>
            <person name="Earthrowl M."/>
            <person name="Ellington A.G."/>
            <person name="Errington H."/>
            <person name="Frankish A."/>
            <person name="Frankland J."/>
            <person name="French L."/>
            <person name="Garner P."/>
            <person name="Garnett J."/>
            <person name="Gay L."/>
            <person name="Ghori M.R.J."/>
            <person name="Gibson R."/>
            <person name="Gilby L.M."/>
            <person name="Gillett W."/>
            <person name="Glithero R.J."/>
            <person name="Grafham D.V."/>
            <person name="Griffiths C."/>
            <person name="Griffiths-Jones S."/>
            <person name="Grocock R."/>
            <person name="Hammond S."/>
            <person name="Harrison E.S.I."/>
            <person name="Hart E."/>
            <person name="Haugen E."/>
            <person name="Heath P.D."/>
            <person name="Holmes S."/>
            <person name="Holt K."/>
            <person name="Howden P.J."/>
            <person name="Hunt A.R."/>
            <person name="Hunt S.E."/>
            <person name="Hunter G."/>
            <person name="Isherwood J."/>
            <person name="James R."/>
            <person name="Johnson C."/>
            <person name="Johnson D."/>
            <person name="Joy A."/>
            <person name="Kay M."/>
            <person name="Kershaw J.K."/>
            <person name="Kibukawa M."/>
            <person name="Kimberley A.M."/>
            <person name="King A."/>
            <person name="Knights A.J."/>
            <person name="Lad H."/>
            <person name="Laird G."/>
            <person name="Lawlor S."/>
            <person name="Leongamornlert D.A."/>
            <person name="Lloyd D.M."/>
            <person name="Loveland J."/>
            <person name="Lovell J."/>
            <person name="Lush M.J."/>
            <person name="Lyne R."/>
            <person name="Martin S."/>
            <person name="Mashreghi-Mohammadi M."/>
            <person name="Matthews L."/>
            <person name="Matthews N.S.W."/>
            <person name="McLaren S."/>
            <person name="Milne S."/>
            <person name="Mistry S."/>
            <person name="Moore M.J.F."/>
            <person name="Nickerson T."/>
            <person name="O'Dell C.N."/>
            <person name="Oliver K."/>
            <person name="Palmeiri A."/>
            <person name="Palmer S.A."/>
            <person name="Parker A."/>
            <person name="Patel D."/>
            <person name="Pearce A.V."/>
            <person name="Peck A.I."/>
            <person name="Pelan S."/>
            <person name="Phelps K."/>
            <person name="Phillimore B.J."/>
            <person name="Plumb R."/>
            <person name="Rajan J."/>
            <person name="Raymond C."/>
            <person name="Rouse G."/>
            <person name="Saenphimmachak C."/>
            <person name="Sehra H.K."/>
            <person name="Sheridan E."/>
            <person name="Shownkeen R."/>
            <person name="Sims S."/>
            <person name="Skuce C.D."/>
            <person name="Smith M."/>
            <person name="Steward C."/>
            <person name="Subramanian S."/>
            <person name="Sycamore N."/>
            <person name="Tracey A."/>
            <person name="Tromans A."/>
            <person name="Van Helmond Z."/>
            <person name="Wall M."/>
            <person name="Wallis J.M."/>
            <person name="White S."/>
            <person name="Whitehead S.L."/>
            <person name="Wilkinson J.E."/>
            <person name="Willey D.L."/>
            <person name="Williams H."/>
            <person name="Wilming L."/>
            <person name="Wray P.W."/>
            <person name="Wu Z."/>
            <person name="Coulson A."/>
            <person name="Vaudin M."/>
            <person name="Sulston J.E."/>
            <person name="Durbin R.M."/>
            <person name="Hubbard T."/>
            <person name="Wooster R."/>
            <person name="Dunham I."/>
            <person name="Carter N.P."/>
            <person name="McVean G."/>
            <person name="Ross M.T."/>
            <person name="Harrow J."/>
            <person name="Olson M.V."/>
            <person name="Beck S."/>
            <person name="Rogers J."/>
            <person name="Bentley D.R."/>
        </authorList>
    </citation>
    <scope>NUCLEOTIDE SEQUENCE [LARGE SCALE GENOMIC DNA]</scope>
</reference>
<reference key="2">
    <citation type="journal article" date="2004" name="Nat. Genet.">
        <title>Complete sequencing and characterization of 21,243 full-length human cDNAs.</title>
        <authorList>
            <person name="Ota T."/>
            <person name="Suzuki Y."/>
            <person name="Nishikawa T."/>
            <person name="Otsuki T."/>
            <person name="Sugiyama T."/>
            <person name="Irie R."/>
            <person name="Wakamatsu A."/>
            <person name="Hayashi K."/>
            <person name="Sato H."/>
            <person name="Nagai K."/>
            <person name="Kimura K."/>
            <person name="Makita H."/>
            <person name="Sekine M."/>
            <person name="Obayashi M."/>
            <person name="Nishi T."/>
            <person name="Shibahara T."/>
            <person name="Tanaka T."/>
            <person name="Ishii S."/>
            <person name="Yamamoto J."/>
            <person name="Saito K."/>
            <person name="Kawai Y."/>
            <person name="Isono Y."/>
            <person name="Nakamura Y."/>
            <person name="Nagahari K."/>
            <person name="Murakami K."/>
            <person name="Yasuda T."/>
            <person name="Iwayanagi T."/>
            <person name="Wagatsuma M."/>
            <person name="Shiratori A."/>
            <person name="Sudo H."/>
            <person name="Hosoiri T."/>
            <person name="Kaku Y."/>
            <person name="Kodaira H."/>
            <person name="Kondo H."/>
            <person name="Sugawara M."/>
            <person name="Takahashi M."/>
            <person name="Kanda K."/>
            <person name="Yokoi T."/>
            <person name="Furuya T."/>
            <person name="Kikkawa E."/>
            <person name="Omura Y."/>
            <person name="Abe K."/>
            <person name="Kamihara K."/>
            <person name="Katsuta N."/>
            <person name="Sato K."/>
            <person name="Tanikawa M."/>
            <person name="Yamazaki M."/>
            <person name="Ninomiya K."/>
            <person name="Ishibashi T."/>
            <person name="Yamashita H."/>
            <person name="Murakawa K."/>
            <person name="Fujimori K."/>
            <person name="Tanai H."/>
            <person name="Kimata M."/>
            <person name="Watanabe M."/>
            <person name="Hiraoka S."/>
            <person name="Chiba Y."/>
            <person name="Ishida S."/>
            <person name="Ono Y."/>
            <person name="Takiguchi S."/>
            <person name="Watanabe S."/>
            <person name="Yosida M."/>
            <person name="Hotuta T."/>
            <person name="Kusano J."/>
            <person name="Kanehori K."/>
            <person name="Takahashi-Fujii A."/>
            <person name="Hara H."/>
            <person name="Tanase T.-O."/>
            <person name="Nomura Y."/>
            <person name="Togiya S."/>
            <person name="Komai F."/>
            <person name="Hara R."/>
            <person name="Takeuchi K."/>
            <person name="Arita M."/>
            <person name="Imose N."/>
            <person name="Musashino K."/>
            <person name="Yuuki H."/>
            <person name="Oshima A."/>
            <person name="Sasaki N."/>
            <person name="Aotsuka S."/>
            <person name="Yoshikawa Y."/>
            <person name="Matsunawa H."/>
            <person name="Ichihara T."/>
            <person name="Shiohata N."/>
            <person name="Sano S."/>
            <person name="Moriya S."/>
            <person name="Momiyama H."/>
            <person name="Satoh N."/>
            <person name="Takami S."/>
            <person name="Terashima Y."/>
            <person name="Suzuki O."/>
            <person name="Nakagawa S."/>
            <person name="Senoh A."/>
            <person name="Mizoguchi H."/>
            <person name="Goto Y."/>
            <person name="Shimizu F."/>
            <person name="Wakebe H."/>
            <person name="Hishigaki H."/>
            <person name="Watanabe T."/>
            <person name="Sugiyama A."/>
            <person name="Takemoto M."/>
            <person name="Kawakami B."/>
            <person name="Yamazaki M."/>
            <person name="Watanabe K."/>
            <person name="Kumagai A."/>
            <person name="Itakura S."/>
            <person name="Fukuzumi Y."/>
            <person name="Fujimori Y."/>
            <person name="Komiyama M."/>
            <person name="Tashiro H."/>
            <person name="Tanigami A."/>
            <person name="Fujiwara T."/>
            <person name="Ono T."/>
            <person name="Yamada K."/>
            <person name="Fujii Y."/>
            <person name="Ozaki K."/>
            <person name="Hirao M."/>
            <person name="Ohmori Y."/>
            <person name="Kawabata A."/>
            <person name="Hikiji T."/>
            <person name="Kobatake N."/>
            <person name="Inagaki H."/>
            <person name="Ikema Y."/>
            <person name="Okamoto S."/>
            <person name="Okitani R."/>
            <person name="Kawakami T."/>
            <person name="Noguchi S."/>
            <person name="Itoh T."/>
            <person name="Shigeta K."/>
            <person name="Senba T."/>
            <person name="Matsumura K."/>
            <person name="Nakajima Y."/>
            <person name="Mizuno T."/>
            <person name="Morinaga M."/>
            <person name="Sasaki M."/>
            <person name="Togashi T."/>
            <person name="Oyama M."/>
            <person name="Hata H."/>
            <person name="Watanabe M."/>
            <person name="Komatsu T."/>
            <person name="Mizushima-Sugano J."/>
            <person name="Satoh T."/>
            <person name="Shirai Y."/>
            <person name="Takahashi Y."/>
            <person name="Nakagawa K."/>
            <person name="Okumura K."/>
            <person name="Nagase T."/>
            <person name="Nomura N."/>
            <person name="Kikuchi H."/>
            <person name="Masuho Y."/>
            <person name="Yamashita R."/>
            <person name="Nakai K."/>
            <person name="Yada T."/>
            <person name="Nakamura Y."/>
            <person name="Ohara O."/>
            <person name="Isogai T."/>
            <person name="Sugano S."/>
        </authorList>
    </citation>
    <scope>NUCLEOTIDE SEQUENCE [LARGE SCALE MRNA] OF 256-1454 (ISOFORM 2)</scope>
    <source>
        <tissue>Testis</tissue>
    </source>
</reference>
<reference key="3">
    <citation type="journal article" date="2013" name="J. Proteome Res.">
        <title>Toward a comprehensive characterization of a human cancer cell phosphoproteome.</title>
        <authorList>
            <person name="Zhou H."/>
            <person name="Di Palma S."/>
            <person name="Preisinger C."/>
            <person name="Peng M."/>
            <person name="Polat A.N."/>
            <person name="Heck A.J."/>
            <person name="Mohammed S."/>
        </authorList>
    </citation>
    <scope>PHOSPHORYLATION [LARGE SCALE ANALYSIS] AT SER-1355</scope>
    <scope>IDENTIFICATION BY MASS SPECTROMETRY [LARGE SCALE ANALYSIS]</scope>
    <source>
        <tissue>Cervix carcinoma</tissue>
        <tissue>Erythroleukemia</tissue>
    </source>
</reference>
<reference key="4">
    <citation type="journal article" date="2015" name="Cell">
        <title>A Dynamic Protein Interaction Landscape of the Human Centrosome-Cilium Interface.</title>
        <authorList>
            <person name="Gupta G.D."/>
            <person name="Coyaud E."/>
            <person name="Goncalves J."/>
            <person name="Mojarad B.A."/>
            <person name="Liu Y."/>
            <person name="Wu Q."/>
            <person name="Gheiratmand L."/>
            <person name="Comartin D."/>
            <person name="Tkach J.M."/>
            <person name="Cheung S.W."/>
            <person name="Bashkurov M."/>
            <person name="Hasegan M."/>
            <person name="Knight J.D."/>
            <person name="Lin Z.Y."/>
            <person name="Schueler M."/>
            <person name="Hildebrandt F."/>
            <person name="Moffat J."/>
            <person name="Gingras A.C."/>
            <person name="Raught B."/>
            <person name="Pelletier L."/>
        </authorList>
    </citation>
    <scope>SUBCELLULAR LOCATION</scope>
</reference>
<gene>
    <name type="primary">CCDC18</name>
</gene>
<feature type="chain" id="PRO_0000284775" description="Coiled-coil domain-containing protein 18">
    <location>
        <begin position="1"/>
        <end position="1454"/>
    </location>
</feature>
<feature type="region of interest" description="Disordered" evidence="3">
    <location>
        <begin position="828"/>
        <end position="851"/>
    </location>
</feature>
<feature type="coiled-coil region" evidence="2">
    <location>
        <begin position="107"/>
        <end position="138"/>
    </location>
</feature>
<feature type="coiled-coil region" evidence="2">
    <location>
        <begin position="170"/>
        <end position="402"/>
    </location>
</feature>
<feature type="coiled-coil region" evidence="2">
    <location>
        <begin position="438"/>
        <end position="464"/>
    </location>
</feature>
<feature type="coiled-coil region" evidence="2">
    <location>
        <begin position="508"/>
        <end position="1309"/>
    </location>
</feature>
<feature type="modified residue" description="Phosphoserine" evidence="1">
    <location>
        <position position="45"/>
    </location>
</feature>
<feature type="modified residue" description="Phosphoserine" evidence="7">
    <location>
        <position position="1355"/>
    </location>
</feature>
<feature type="splice variant" id="VSP_024636" description="In isoform 2." evidence="5">
    <location>
        <begin position="1295"/>
        <end position="1450"/>
    </location>
</feature>
<feature type="sequence conflict" description="In Ref. 1; BAC86410." evidence="6" ref="1">
    <original>N</original>
    <variation>T</variation>
    <location>
        <position position="326"/>
    </location>
</feature>
<feature type="sequence conflict" description="In Ref. 1; BAC86410." evidence="6" ref="1">
    <original>V</original>
    <variation>VA</variation>
    <location>
        <position position="498"/>
    </location>
</feature>
<feature type="sequence conflict" description="In Ref. 1; BAC86410." evidence="6" ref="1">
    <original>L</original>
    <variation>F</variation>
    <location>
        <position position="901"/>
    </location>
</feature>
<feature type="sequence conflict" description="In Ref. 1; BAC86410." evidence="6" ref="1">
    <original>K</original>
    <variation>E</variation>
    <location>
        <position position="1002"/>
    </location>
</feature>
<feature type="sequence conflict" description="In Ref. 1; BAC86410." evidence="6" ref="1">
    <original>Y</original>
    <variation>C</variation>
    <location>
        <position position="1126"/>
    </location>
</feature>
<feature type="sequence conflict" description="In Ref. 1; BAC86410." evidence="6" ref="1">
    <original>E</original>
    <variation>K</variation>
    <location>
        <position position="1135"/>
    </location>
</feature>
<organism>
    <name type="scientific">Homo sapiens</name>
    <name type="common">Human</name>
    <dbReference type="NCBI Taxonomy" id="9606"/>
    <lineage>
        <taxon>Eukaryota</taxon>
        <taxon>Metazoa</taxon>
        <taxon>Chordata</taxon>
        <taxon>Craniata</taxon>
        <taxon>Vertebrata</taxon>
        <taxon>Euteleostomi</taxon>
        <taxon>Mammalia</taxon>
        <taxon>Eutheria</taxon>
        <taxon>Euarchontoglires</taxon>
        <taxon>Primates</taxon>
        <taxon>Haplorrhini</taxon>
        <taxon>Catarrhini</taxon>
        <taxon>Hominidae</taxon>
        <taxon>Homo</taxon>
    </lineage>
</organism>
<protein>
    <recommendedName>
        <fullName>Coiled-coil domain-containing protein 18</fullName>
    </recommendedName>
    <alternativeName>
        <fullName>Sarcoma antigen NY-SAR-24</fullName>
    </alternativeName>
</protein>
<sequence>MESSSSDYYNKDNEEESLLANVASLRHELKITEWSLQSLGEELSSVSPSENSDYAPNPSRSEKLILDVQPSHPGLLNYSPYENVCKISGSSTDFQKKPRDKMFSSSAPVDQEIKSLREKLNKLRQQNACLVTQNHSLMTKFESIHFELTQSRAKVSMLESAQQQAASVPILEEQIINLEAEVSAQDKVLREAENKLEQSQKMVIEKEQSLQESKEECIKLKVDLLEQTKQGKRAERQRNEALYNAEELSKAFQQYKKKVAEKLEKVQAEEEILERNLTNCEKENKRLQERCGLYKSELEILKEKLRQLKEENNNGKEKLRIMAVKNSEVMAQLTESRQSILKLESELENKDEILRDKFSLMNENRELKVRVAAQNERLDLCQQEIESSRVELRSLEKIISQLPLKRELFGFKSYLSKYQMSSFSNKEDRCIGCCEANKLVISELRIKLAIKEAEIQKLHANLTANQLSQSLITCNDSQESSKLSSLETEPVKLGGHQVESVKDQNQHTMNKQYEKERQRLVTGIEELRTKLIQIEAENSDLKVNMAHRTSQFQLIQEELLEKASNSSKLESEMTKKCSQLLTLEKQLEEKIVAYSSIAAKNAELEQELMEKNEKIRSLETNINTEHEKICLAFEKAKKIHLEQHKEMEKQIERLEAQLEKKDQQFKEQEKTMSMLQQDIICKQHHLESLDRLLTESKGEMKKENMKKDEALKALQNQVSEETIKVRQLDSALEICKEELVLHLNQLEGNKEKFEKQLKKKSEEVYCLQKELKIKNHSLQETSEQNVILQHTLQQQQQMLQQETIRNGELEDTQTKLEKQVSKLEQELQKQRESSAEKLRKMEEKCESAAHEADLKRQKVIELTGTARQVKIEMDQYKEELSKMEKEIMHLKRDGENKAMHLSQLDMILDQTKTELEKKTNAVKELEKLQHSTETELTEALQKREVLETELQNAHGELKSTLRQLQELRDVLQKAQLSLEEKYTTIKDLTAELRECKMEIEDKKQELLEMDQALKERNWELKQRAAQVTHLDMTIREHRGEMEQKIIKLEGTLEKSELELKECNKQIESLNDKLQNAKEQLREKEFIMLQNEQEISQLKKEIERTQQRMKEMESVMKEQEQYIATQYKEAIDLGQELRLTREQVQNSHTELAEARHQQVQAQREIERLSSELEDMKQLSKEKDAHGNHLAEELGASKVREAHLEARMQAEIKKLSAEVESLKEAYHMEMISHQENHAKWKISADSQKSSVQQLNEQLEKAKLELEEAQDTVSNLHQQVQDRNEVIEAANEALLTKESELTRLQAKISGHEKAEDIKFLPAPFTSPTEIMPDVQDPKFAKCFHTSFSKCTKLRRSISASDLTFKIHGDEDLSEELLQDLKKMQLEQPSTLEESHKNLTYTQPDSFKPLTYNLEADSSENNDFNTLSGMLRYINKEVRLLKKSSMQTGAGLNQGENV</sequence>
<dbReference type="EMBL" id="AK126045">
    <property type="protein sequence ID" value="BAC86410.1"/>
    <property type="status" value="ALT_INIT"/>
    <property type="molecule type" value="mRNA"/>
</dbReference>
<dbReference type="EMBL" id="AC126124">
    <property type="status" value="NOT_ANNOTATED_CDS"/>
    <property type="molecule type" value="Genomic_DNA"/>
</dbReference>
<dbReference type="EMBL" id="AL139421">
    <property type="status" value="NOT_ANNOTATED_CDS"/>
    <property type="molecule type" value="Genomic_DNA"/>
</dbReference>
<dbReference type="CCDS" id="CCDS76180.1">
    <molecule id="Q5T9S5-1"/>
</dbReference>
<dbReference type="RefSeq" id="NP_001293005.1">
    <molecule id="Q5T9S5-1"/>
    <property type="nucleotide sequence ID" value="NM_001306076.1"/>
</dbReference>
<dbReference type="RefSeq" id="NP_996769.3">
    <property type="nucleotide sequence ID" value="NM_206886.4"/>
</dbReference>
<dbReference type="RefSeq" id="XP_047275439.1">
    <molecule id="Q5T9S5-1"/>
    <property type="nucleotide sequence ID" value="XM_047419483.1"/>
</dbReference>
<dbReference type="RefSeq" id="XP_047275463.1">
    <molecule id="Q5T9S5-2"/>
    <property type="nucleotide sequence ID" value="XM_047419507.1"/>
</dbReference>
<dbReference type="RefSeq" id="XP_047275469.1">
    <molecule id="Q5T9S5-2"/>
    <property type="nucleotide sequence ID" value="XM_047419513.1"/>
</dbReference>
<dbReference type="SMR" id="Q5T9S5"/>
<dbReference type="BioGRID" id="131230">
    <property type="interactions" value="77"/>
</dbReference>
<dbReference type="FunCoup" id="Q5T9S5">
    <property type="interactions" value="845"/>
</dbReference>
<dbReference type="IntAct" id="Q5T9S5">
    <property type="interactions" value="48"/>
</dbReference>
<dbReference type="MINT" id="Q5T9S5"/>
<dbReference type="STRING" id="9606.ENSP00000343377"/>
<dbReference type="iPTMnet" id="Q5T9S5"/>
<dbReference type="PhosphoSitePlus" id="Q5T9S5"/>
<dbReference type="BioMuta" id="CCDC18"/>
<dbReference type="DMDM" id="74745727"/>
<dbReference type="jPOST" id="Q5T9S5"/>
<dbReference type="MassIVE" id="Q5T9S5"/>
<dbReference type="PaxDb" id="9606-ENSP00000383808"/>
<dbReference type="PeptideAtlas" id="Q5T9S5"/>
<dbReference type="ProteomicsDB" id="64812">
    <molecule id="Q5T9S5-1"/>
</dbReference>
<dbReference type="ProteomicsDB" id="64813">
    <molecule id="Q5T9S5-2"/>
</dbReference>
<dbReference type="Pumba" id="Q5T9S5"/>
<dbReference type="Antibodypedia" id="33656">
    <property type="antibodies" value="49 antibodies from 10 providers"/>
</dbReference>
<dbReference type="DNASU" id="343099"/>
<dbReference type="Ensembl" id="ENST00000343253.11">
    <molecule id="Q5T9S5-1"/>
    <property type="protein sequence ID" value="ENSP00000343377.7"/>
    <property type="gene ID" value="ENSG00000122483.18"/>
</dbReference>
<dbReference type="Ensembl" id="ENST00000370276.6">
    <molecule id="Q5T9S5-1"/>
    <property type="protein sequence ID" value="ENSP00000359299.2"/>
    <property type="gene ID" value="ENSG00000122483.18"/>
</dbReference>
<dbReference type="GeneID" id="343099"/>
<dbReference type="KEGG" id="hsa:343099"/>
<dbReference type="UCSC" id="uc057iix.1">
    <molecule id="Q5T9S5-1"/>
    <property type="organism name" value="human"/>
</dbReference>
<dbReference type="AGR" id="HGNC:30370"/>
<dbReference type="CTD" id="343099"/>
<dbReference type="DisGeNET" id="343099"/>
<dbReference type="GeneCards" id="CCDC18"/>
<dbReference type="HGNC" id="HGNC:30370">
    <property type="gene designation" value="CCDC18"/>
</dbReference>
<dbReference type="HPA" id="ENSG00000122483">
    <property type="expression patterns" value="Tissue enhanced (bone marrow, lymphoid tissue, testis)"/>
</dbReference>
<dbReference type="neXtProt" id="NX_Q5T9S5"/>
<dbReference type="OpenTargets" id="ENSG00000122483"/>
<dbReference type="PharmGKB" id="PA142672178"/>
<dbReference type="VEuPathDB" id="HostDB:ENSG00000122483"/>
<dbReference type="eggNOG" id="ENOG502QTZW">
    <property type="taxonomic scope" value="Eukaryota"/>
</dbReference>
<dbReference type="GeneTree" id="ENSGT00940000153190"/>
<dbReference type="InParanoid" id="Q5T9S5"/>
<dbReference type="OMA" id="SKQPWES"/>
<dbReference type="OrthoDB" id="2160759at2759"/>
<dbReference type="PAN-GO" id="Q5T9S5">
    <property type="GO annotations" value="0 GO annotations based on evolutionary models"/>
</dbReference>
<dbReference type="PhylomeDB" id="Q5T9S5"/>
<dbReference type="PathwayCommons" id="Q5T9S5"/>
<dbReference type="SignaLink" id="Q5T9S5"/>
<dbReference type="BioGRID-ORCS" id="343099">
    <property type="hits" value="1 hit in 318 CRISPR screens"/>
</dbReference>
<dbReference type="ChiTaRS" id="CCDC18">
    <property type="organism name" value="human"/>
</dbReference>
<dbReference type="GenomeRNAi" id="343099"/>
<dbReference type="Pharos" id="Q5T9S5">
    <property type="development level" value="Tdark"/>
</dbReference>
<dbReference type="PRO" id="PR:Q5T9S5"/>
<dbReference type="Proteomes" id="UP000005640">
    <property type="component" value="Chromosome 1"/>
</dbReference>
<dbReference type="RNAct" id="Q5T9S5">
    <property type="molecule type" value="protein"/>
</dbReference>
<dbReference type="Bgee" id="ENSG00000122483">
    <property type="expression patterns" value="Expressed in male germ line stem cell (sensu Vertebrata) in testis and 105 other cell types or tissues"/>
</dbReference>
<dbReference type="ExpressionAtlas" id="Q5T9S5">
    <property type="expression patterns" value="baseline and differential"/>
</dbReference>
<dbReference type="GO" id="GO:0034451">
    <property type="term" value="C:centriolar satellite"/>
    <property type="evidence" value="ECO:0000314"/>
    <property type="project" value="UniProtKB"/>
</dbReference>
<dbReference type="GO" id="GO:0005737">
    <property type="term" value="C:cytoplasm"/>
    <property type="evidence" value="ECO:0007669"/>
    <property type="project" value="UniProtKB-KW"/>
</dbReference>
<dbReference type="PANTHER" id="PTHR18875:SF8">
    <property type="entry name" value="COILED-COIL DOMAIN-CONTAINING PROTEIN 18"/>
    <property type="match status" value="1"/>
</dbReference>
<dbReference type="PANTHER" id="PTHR18875">
    <property type="entry name" value="SARCOMA ANTIGEN NY-SAR-24/CYTOSKELETAL PROTEIN SOJO"/>
    <property type="match status" value="1"/>
</dbReference>
<name>CCD18_HUMAN</name>
<evidence type="ECO:0000250" key="1">
    <source>
        <dbReference type="UniProtKB" id="Q640L5"/>
    </source>
</evidence>
<evidence type="ECO:0000255" key="2"/>
<evidence type="ECO:0000256" key="3">
    <source>
        <dbReference type="SAM" id="MobiDB-lite"/>
    </source>
</evidence>
<evidence type="ECO:0000269" key="4">
    <source>
    </source>
</evidence>
<evidence type="ECO:0000303" key="5">
    <source>
    </source>
</evidence>
<evidence type="ECO:0000305" key="6"/>
<evidence type="ECO:0007744" key="7">
    <source>
    </source>
</evidence>
<keyword id="KW-0025">Alternative splicing</keyword>
<keyword id="KW-0175">Coiled coil</keyword>
<keyword id="KW-0963">Cytoplasm</keyword>
<keyword id="KW-0206">Cytoskeleton</keyword>
<keyword id="KW-0597">Phosphoprotein</keyword>
<keyword id="KW-1267">Proteomics identification</keyword>
<keyword id="KW-1185">Reference proteome</keyword>